<feature type="chain" id="PRO_1000024899" description="Ribonuclease PH">
    <location>
        <begin position="1"/>
        <end position="238"/>
    </location>
</feature>
<feature type="binding site" evidence="1">
    <location>
        <position position="86"/>
    </location>
    <ligand>
        <name>phosphate</name>
        <dbReference type="ChEBI" id="CHEBI:43474"/>
        <note>substrate</note>
    </ligand>
</feature>
<feature type="binding site" evidence="1">
    <location>
        <begin position="124"/>
        <end position="126"/>
    </location>
    <ligand>
        <name>phosphate</name>
        <dbReference type="ChEBI" id="CHEBI:43474"/>
        <note>substrate</note>
    </ligand>
</feature>
<reference key="1">
    <citation type="journal article" date="2010" name="J. Bacteriol.">
        <title>Genome sequence of the dioxin-mineralizing bacterium Sphingomonas wittichii RW1.</title>
        <authorList>
            <person name="Miller T.R."/>
            <person name="Delcher A.L."/>
            <person name="Salzberg S.L."/>
            <person name="Saunders E."/>
            <person name="Detter J.C."/>
            <person name="Halden R.U."/>
        </authorList>
    </citation>
    <scope>NUCLEOTIDE SEQUENCE [LARGE SCALE GENOMIC DNA]</scope>
    <source>
        <strain>DSM 6014 / CCUG 31198 / JCM 15750 / NBRC 105917 / EY 4224 / RW1</strain>
    </source>
</reference>
<gene>
    <name evidence="1" type="primary">rph</name>
    <name type="ordered locus">Swit_0567</name>
</gene>
<accession>A5V3R9</accession>
<sequence length="238" mass="25308">MRPSGRAPDQMRAISIETGFTVHAEGSVLISFGDTRVLVTASVEEKVPPFLRGKGQGWVTAEYGMLPRATHTRGSREAAKGKQSGRTQEIQRLIGRSLRAVVDMAKLGERQIVIDCDVLQADGGTRTASISGGWVALRLAVDKLLASGAIAEDPITAQVAAISCGIHEGTPVLDLDYIEDSNAHADANFVLLDNGNIAEAQATAEGATYDEEALLRLLRLARIGCGEIFAAQRKATGR</sequence>
<name>RNPH_RHIWR</name>
<proteinExistence type="inferred from homology"/>
<keyword id="KW-0548">Nucleotidyltransferase</keyword>
<keyword id="KW-1185">Reference proteome</keyword>
<keyword id="KW-0694">RNA-binding</keyword>
<keyword id="KW-0698">rRNA processing</keyword>
<keyword id="KW-0808">Transferase</keyword>
<keyword id="KW-0819">tRNA processing</keyword>
<keyword id="KW-0820">tRNA-binding</keyword>
<dbReference type="EC" id="2.7.7.56" evidence="1"/>
<dbReference type="EMBL" id="CP000699">
    <property type="protein sequence ID" value="ABQ66935.1"/>
    <property type="molecule type" value="Genomic_DNA"/>
</dbReference>
<dbReference type="SMR" id="A5V3R9"/>
<dbReference type="STRING" id="392499.Swit_0567"/>
<dbReference type="PaxDb" id="392499-Swit_0567"/>
<dbReference type="KEGG" id="swi:Swit_0567"/>
<dbReference type="eggNOG" id="COG0689">
    <property type="taxonomic scope" value="Bacteria"/>
</dbReference>
<dbReference type="HOGENOM" id="CLU_050858_0_0_5"/>
<dbReference type="OrthoDB" id="9802265at2"/>
<dbReference type="Proteomes" id="UP000001989">
    <property type="component" value="Chromosome"/>
</dbReference>
<dbReference type="GO" id="GO:0000175">
    <property type="term" value="F:3'-5'-RNA exonuclease activity"/>
    <property type="evidence" value="ECO:0007669"/>
    <property type="project" value="UniProtKB-UniRule"/>
</dbReference>
<dbReference type="GO" id="GO:0000049">
    <property type="term" value="F:tRNA binding"/>
    <property type="evidence" value="ECO:0007669"/>
    <property type="project" value="UniProtKB-UniRule"/>
</dbReference>
<dbReference type="GO" id="GO:0009022">
    <property type="term" value="F:tRNA nucleotidyltransferase activity"/>
    <property type="evidence" value="ECO:0007669"/>
    <property type="project" value="UniProtKB-UniRule"/>
</dbReference>
<dbReference type="GO" id="GO:0016075">
    <property type="term" value="P:rRNA catabolic process"/>
    <property type="evidence" value="ECO:0007669"/>
    <property type="project" value="UniProtKB-UniRule"/>
</dbReference>
<dbReference type="GO" id="GO:0006364">
    <property type="term" value="P:rRNA processing"/>
    <property type="evidence" value="ECO:0007669"/>
    <property type="project" value="UniProtKB-KW"/>
</dbReference>
<dbReference type="GO" id="GO:0008033">
    <property type="term" value="P:tRNA processing"/>
    <property type="evidence" value="ECO:0007669"/>
    <property type="project" value="UniProtKB-UniRule"/>
</dbReference>
<dbReference type="CDD" id="cd11362">
    <property type="entry name" value="RNase_PH_bact"/>
    <property type="match status" value="1"/>
</dbReference>
<dbReference type="FunFam" id="3.30.230.70:FF:000003">
    <property type="entry name" value="Ribonuclease PH"/>
    <property type="match status" value="1"/>
</dbReference>
<dbReference type="Gene3D" id="3.30.230.70">
    <property type="entry name" value="GHMP Kinase, N-terminal domain"/>
    <property type="match status" value="1"/>
</dbReference>
<dbReference type="HAMAP" id="MF_00564">
    <property type="entry name" value="RNase_PH"/>
    <property type="match status" value="1"/>
</dbReference>
<dbReference type="InterPro" id="IPR001247">
    <property type="entry name" value="ExoRNase_PH_dom1"/>
</dbReference>
<dbReference type="InterPro" id="IPR015847">
    <property type="entry name" value="ExoRNase_PH_dom2"/>
</dbReference>
<dbReference type="InterPro" id="IPR036345">
    <property type="entry name" value="ExoRNase_PH_dom2_sf"/>
</dbReference>
<dbReference type="InterPro" id="IPR027408">
    <property type="entry name" value="PNPase/RNase_PH_dom_sf"/>
</dbReference>
<dbReference type="InterPro" id="IPR020568">
    <property type="entry name" value="Ribosomal_Su5_D2-typ_SF"/>
</dbReference>
<dbReference type="InterPro" id="IPR050080">
    <property type="entry name" value="RNase_PH"/>
</dbReference>
<dbReference type="InterPro" id="IPR002381">
    <property type="entry name" value="RNase_PH_bac-type"/>
</dbReference>
<dbReference type="InterPro" id="IPR018336">
    <property type="entry name" value="RNase_PH_CS"/>
</dbReference>
<dbReference type="NCBIfam" id="TIGR01966">
    <property type="entry name" value="RNasePH"/>
    <property type="match status" value="1"/>
</dbReference>
<dbReference type="PANTHER" id="PTHR11953">
    <property type="entry name" value="EXOSOME COMPLEX COMPONENT"/>
    <property type="match status" value="1"/>
</dbReference>
<dbReference type="PANTHER" id="PTHR11953:SF0">
    <property type="entry name" value="EXOSOME COMPLEX COMPONENT RRP41"/>
    <property type="match status" value="1"/>
</dbReference>
<dbReference type="Pfam" id="PF01138">
    <property type="entry name" value="RNase_PH"/>
    <property type="match status" value="1"/>
</dbReference>
<dbReference type="Pfam" id="PF03725">
    <property type="entry name" value="RNase_PH_C"/>
    <property type="match status" value="1"/>
</dbReference>
<dbReference type="SUPFAM" id="SSF55666">
    <property type="entry name" value="Ribonuclease PH domain 2-like"/>
    <property type="match status" value="1"/>
</dbReference>
<dbReference type="SUPFAM" id="SSF54211">
    <property type="entry name" value="Ribosomal protein S5 domain 2-like"/>
    <property type="match status" value="1"/>
</dbReference>
<dbReference type="PROSITE" id="PS01277">
    <property type="entry name" value="RIBONUCLEASE_PH"/>
    <property type="match status" value="1"/>
</dbReference>
<evidence type="ECO:0000255" key="1">
    <source>
        <dbReference type="HAMAP-Rule" id="MF_00564"/>
    </source>
</evidence>
<organism>
    <name type="scientific">Rhizorhabdus wittichii (strain DSM 6014 / CCUG 31198 / JCM 15750 / NBRC 105917 / EY 4224 / RW1)</name>
    <name type="common">Sphingomonas wittichii</name>
    <dbReference type="NCBI Taxonomy" id="392499"/>
    <lineage>
        <taxon>Bacteria</taxon>
        <taxon>Pseudomonadati</taxon>
        <taxon>Pseudomonadota</taxon>
        <taxon>Alphaproteobacteria</taxon>
        <taxon>Sphingomonadales</taxon>
        <taxon>Sphingomonadaceae</taxon>
        <taxon>Rhizorhabdus</taxon>
    </lineage>
</organism>
<comment type="function">
    <text evidence="1">Phosphorolytic 3'-5' exoribonuclease that plays an important role in tRNA 3'-end maturation. Removes nucleotide residues following the 3'-CCA terminus of tRNAs; can also add nucleotides to the ends of RNA molecules by using nucleoside diphosphates as substrates, but this may not be physiologically important. Probably plays a role in initiation of 16S rRNA degradation (leading to ribosome degradation) during starvation.</text>
</comment>
<comment type="catalytic activity">
    <reaction evidence="1">
        <text>tRNA(n+1) + phosphate = tRNA(n) + a ribonucleoside 5'-diphosphate</text>
        <dbReference type="Rhea" id="RHEA:10628"/>
        <dbReference type="Rhea" id="RHEA-COMP:17343"/>
        <dbReference type="Rhea" id="RHEA-COMP:17344"/>
        <dbReference type="ChEBI" id="CHEBI:43474"/>
        <dbReference type="ChEBI" id="CHEBI:57930"/>
        <dbReference type="ChEBI" id="CHEBI:173114"/>
        <dbReference type="EC" id="2.7.7.56"/>
    </reaction>
</comment>
<comment type="subunit">
    <text evidence="1">Homohexameric ring arranged as a trimer of dimers.</text>
</comment>
<comment type="similarity">
    <text evidence="1">Belongs to the RNase PH family.</text>
</comment>
<protein>
    <recommendedName>
        <fullName evidence="1">Ribonuclease PH</fullName>
        <shortName evidence="1">RNase PH</shortName>
        <ecNumber evidence="1">2.7.7.56</ecNumber>
    </recommendedName>
    <alternativeName>
        <fullName evidence="1">tRNA nucleotidyltransferase</fullName>
    </alternativeName>
</protein>